<organism>
    <name type="scientific">Pelagibacter ubique (strain HTCC1062)</name>
    <dbReference type="NCBI Taxonomy" id="335992"/>
    <lineage>
        <taxon>Bacteria</taxon>
        <taxon>Pseudomonadati</taxon>
        <taxon>Pseudomonadota</taxon>
        <taxon>Alphaproteobacteria</taxon>
        <taxon>Candidatus Pelagibacterales</taxon>
        <taxon>Candidatus Pelagibacteraceae</taxon>
        <taxon>Candidatus Pelagibacter</taxon>
    </lineage>
</organism>
<gene>
    <name evidence="1" type="primary">secA</name>
    <name type="ordered locus">SAR11_0512</name>
</gene>
<accession>Q4FNA5</accession>
<feature type="chain" id="PRO_1000073491" description="Protein translocase subunit SecA">
    <location>
        <begin position="1"/>
        <end position="854"/>
    </location>
</feature>
<feature type="binding site" evidence="1">
    <location>
        <position position="89"/>
    </location>
    <ligand>
        <name>ATP</name>
        <dbReference type="ChEBI" id="CHEBI:30616"/>
    </ligand>
</feature>
<feature type="binding site" evidence="1">
    <location>
        <begin position="107"/>
        <end position="111"/>
    </location>
    <ligand>
        <name>ATP</name>
        <dbReference type="ChEBI" id="CHEBI:30616"/>
    </ligand>
</feature>
<feature type="binding site" evidence="1">
    <location>
        <position position="501"/>
    </location>
    <ligand>
        <name>ATP</name>
        <dbReference type="ChEBI" id="CHEBI:30616"/>
    </ligand>
</feature>
<comment type="function">
    <text evidence="1">Part of the Sec protein translocase complex. Interacts with the SecYEG preprotein conducting channel. Has a central role in coupling the hydrolysis of ATP to the transfer of proteins into and across the cell membrane, serving both as a receptor for the preprotein-SecB complex and as an ATP-driven molecular motor driving the stepwise translocation of polypeptide chains across the membrane.</text>
</comment>
<comment type="catalytic activity">
    <reaction evidence="1">
        <text>ATP + H2O + cellular proteinSide 1 = ADP + phosphate + cellular proteinSide 2.</text>
        <dbReference type="EC" id="7.4.2.8"/>
    </reaction>
</comment>
<comment type="subunit">
    <text evidence="1">Monomer and homodimer. Part of the essential Sec protein translocation apparatus which comprises SecA, SecYEG and auxiliary proteins SecDF-YajC and YidC.</text>
</comment>
<comment type="subcellular location">
    <subcellularLocation>
        <location evidence="1">Cell inner membrane</location>
        <topology evidence="1">Peripheral membrane protein</topology>
        <orientation evidence="1">Cytoplasmic side</orientation>
    </subcellularLocation>
    <subcellularLocation>
        <location evidence="1">Cytoplasm</location>
    </subcellularLocation>
    <text evidence="1">Distribution is 50-50.</text>
</comment>
<comment type="similarity">
    <text evidence="1">Belongs to the SecA family.</text>
</comment>
<reference key="1">
    <citation type="journal article" date="2005" name="Science">
        <title>Genome streamlining in a cosmopolitan oceanic bacterium.</title>
        <authorList>
            <person name="Giovannoni S.J."/>
            <person name="Tripp H.J."/>
            <person name="Givan S."/>
            <person name="Podar M."/>
            <person name="Vergin K.L."/>
            <person name="Baptista D."/>
            <person name="Bibbs L."/>
            <person name="Eads J."/>
            <person name="Richardson T.H."/>
            <person name="Noordewier M."/>
            <person name="Rappe M.S."/>
            <person name="Short J.M."/>
            <person name="Carrington J.C."/>
            <person name="Mathur E.J."/>
        </authorList>
    </citation>
    <scope>NUCLEOTIDE SEQUENCE [LARGE SCALE GENOMIC DNA]</scope>
    <source>
        <strain>HTCC1062</strain>
    </source>
</reference>
<evidence type="ECO:0000255" key="1">
    <source>
        <dbReference type="HAMAP-Rule" id="MF_01382"/>
    </source>
</evidence>
<sequence length="854" mass="98115">MLNPLNFITKFIKSSNQKELDRINKIVVKVNSLEASVKNLSDEDFPKKTTELKDKLKNGENLDTLLPEAFALVREASKRTRNERHHDVQILGGVVLHEGKIAEMRTGEGKTLTISLAAYLNALTEEGVHIVTVNDYLAKRDSQEMGEIYKFLGLTFGFINNDQDDLERKKNYNFDITYATNSELGFDYLRDNMKFSKEQMVQRGHVYTIVDEIDSCLIDEARTPLVISGAAEDKTEQYLAIDKLIKRLLPEHYEIDEKDRNILLTNEGINNVEKIFSDAGILKNNNFYDPENLSLVHHVNQSLRAHHLFEKGKDYIVKDGTLKIIDELTGRILEGRRFGDGLHQALEAKERIDVQAENQTLASITYQNYFKLYNKISGCTGTAATESQEFYEIYNLVVVIIPTNKEMIRKDWNDQIFRTEEEKNKAIIEKVLECHKQGQPILVFTSSINKSEIYSKLLNDEKIKHVVLNAKNHENEAEIIANAGKMNSVIITTSISGRGVDIQLGGKKGSQPDDELLENKNKIKSLGGLFVIGTERMESRRVDNQARGRAGRQGDEGSSIFYVSLEDDLMRIFGSESMNNILQKLGLKDGESIDHPWINKALERAQQKVEARNFDIRKNLLKFDDVLNDQRHVIFSQRNGVMNSEKVFDYSDEFLSEIISHLISLKTQKLSTTKNNEFNNQLKTLLGKSVDDNEFKNVTELKDEEFKNKINSKFLEARNERIKMLDEEKAKEVEKRIFLQCIDLNWKSHIQYLEQLRQVIGLRSYGQRDPLVEYKKEAFFLFENLLNKLKMDFVTILINLKIVQEPSESISRPLKKETSNDPNCLLIKRKNEKISRNEKCEATGKKFKNCCGAL</sequence>
<keyword id="KW-0067">ATP-binding</keyword>
<keyword id="KW-0997">Cell inner membrane</keyword>
<keyword id="KW-1003">Cell membrane</keyword>
<keyword id="KW-0963">Cytoplasm</keyword>
<keyword id="KW-0472">Membrane</keyword>
<keyword id="KW-0547">Nucleotide-binding</keyword>
<keyword id="KW-0653">Protein transport</keyword>
<keyword id="KW-1185">Reference proteome</keyword>
<keyword id="KW-1278">Translocase</keyword>
<keyword id="KW-0811">Translocation</keyword>
<keyword id="KW-0813">Transport</keyword>
<dbReference type="EC" id="7.4.2.8" evidence="1"/>
<dbReference type="EMBL" id="CP000084">
    <property type="protein sequence ID" value="AAZ21334.1"/>
    <property type="molecule type" value="Genomic_DNA"/>
</dbReference>
<dbReference type="RefSeq" id="WP_011281764.1">
    <property type="nucleotide sequence ID" value="NC_007205.1"/>
</dbReference>
<dbReference type="SMR" id="Q4FNA5"/>
<dbReference type="STRING" id="335992.SAR11_0512"/>
<dbReference type="GeneID" id="66295014"/>
<dbReference type="KEGG" id="pub:SAR11_0512"/>
<dbReference type="eggNOG" id="COG0653">
    <property type="taxonomic scope" value="Bacteria"/>
</dbReference>
<dbReference type="HOGENOM" id="CLU_005314_3_0_5"/>
<dbReference type="OrthoDB" id="9805579at2"/>
<dbReference type="Proteomes" id="UP000002528">
    <property type="component" value="Chromosome"/>
</dbReference>
<dbReference type="GO" id="GO:0031522">
    <property type="term" value="C:cell envelope Sec protein transport complex"/>
    <property type="evidence" value="ECO:0007669"/>
    <property type="project" value="TreeGrafter"/>
</dbReference>
<dbReference type="GO" id="GO:0005829">
    <property type="term" value="C:cytosol"/>
    <property type="evidence" value="ECO:0007669"/>
    <property type="project" value="TreeGrafter"/>
</dbReference>
<dbReference type="GO" id="GO:0005886">
    <property type="term" value="C:plasma membrane"/>
    <property type="evidence" value="ECO:0007669"/>
    <property type="project" value="UniProtKB-SubCell"/>
</dbReference>
<dbReference type="GO" id="GO:0005524">
    <property type="term" value="F:ATP binding"/>
    <property type="evidence" value="ECO:0007669"/>
    <property type="project" value="UniProtKB-UniRule"/>
</dbReference>
<dbReference type="GO" id="GO:0008564">
    <property type="term" value="F:protein-exporting ATPase activity"/>
    <property type="evidence" value="ECO:0007669"/>
    <property type="project" value="UniProtKB-EC"/>
</dbReference>
<dbReference type="GO" id="GO:0065002">
    <property type="term" value="P:intracellular protein transmembrane transport"/>
    <property type="evidence" value="ECO:0007669"/>
    <property type="project" value="UniProtKB-UniRule"/>
</dbReference>
<dbReference type="GO" id="GO:0017038">
    <property type="term" value="P:protein import"/>
    <property type="evidence" value="ECO:0007669"/>
    <property type="project" value="InterPro"/>
</dbReference>
<dbReference type="GO" id="GO:0006605">
    <property type="term" value="P:protein targeting"/>
    <property type="evidence" value="ECO:0007669"/>
    <property type="project" value="UniProtKB-UniRule"/>
</dbReference>
<dbReference type="GO" id="GO:0043952">
    <property type="term" value="P:protein transport by the Sec complex"/>
    <property type="evidence" value="ECO:0007669"/>
    <property type="project" value="TreeGrafter"/>
</dbReference>
<dbReference type="CDD" id="cd17928">
    <property type="entry name" value="DEXDc_SecA"/>
    <property type="match status" value="1"/>
</dbReference>
<dbReference type="CDD" id="cd18803">
    <property type="entry name" value="SF2_C_secA"/>
    <property type="match status" value="1"/>
</dbReference>
<dbReference type="FunFam" id="3.40.50.300:FF:000113">
    <property type="entry name" value="Preprotein translocase subunit SecA"/>
    <property type="match status" value="1"/>
</dbReference>
<dbReference type="FunFam" id="3.90.1440.10:FF:000001">
    <property type="entry name" value="Preprotein translocase subunit SecA"/>
    <property type="match status" value="1"/>
</dbReference>
<dbReference type="Gene3D" id="1.10.3060.10">
    <property type="entry name" value="Helical scaffold and wing domains of SecA"/>
    <property type="match status" value="1"/>
</dbReference>
<dbReference type="Gene3D" id="3.40.50.300">
    <property type="entry name" value="P-loop containing nucleotide triphosphate hydrolases"/>
    <property type="match status" value="2"/>
</dbReference>
<dbReference type="Gene3D" id="3.90.1440.10">
    <property type="entry name" value="SecA, preprotein cross-linking domain"/>
    <property type="match status" value="1"/>
</dbReference>
<dbReference type="HAMAP" id="MF_01382">
    <property type="entry name" value="SecA"/>
    <property type="match status" value="1"/>
</dbReference>
<dbReference type="InterPro" id="IPR014001">
    <property type="entry name" value="Helicase_ATP-bd"/>
</dbReference>
<dbReference type="InterPro" id="IPR001650">
    <property type="entry name" value="Helicase_C-like"/>
</dbReference>
<dbReference type="InterPro" id="IPR027417">
    <property type="entry name" value="P-loop_NTPase"/>
</dbReference>
<dbReference type="InterPro" id="IPR000185">
    <property type="entry name" value="SecA"/>
</dbReference>
<dbReference type="InterPro" id="IPR011115">
    <property type="entry name" value="SecA_DEAD"/>
</dbReference>
<dbReference type="InterPro" id="IPR014018">
    <property type="entry name" value="SecA_motor_DEAD"/>
</dbReference>
<dbReference type="InterPro" id="IPR011130">
    <property type="entry name" value="SecA_preprotein_X-link_dom"/>
</dbReference>
<dbReference type="InterPro" id="IPR044722">
    <property type="entry name" value="SecA_SF2_C"/>
</dbReference>
<dbReference type="InterPro" id="IPR011116">
    <property type="entry name" value="SecA_Wing/Scaffold"/>
</dbReference>
<dbReference type="InterPro" id="IPR036266">
    <property type="entry name" value="SecA_Wing/Scaffold_sf"/>
</dbReference>
<dbReference type="InterPro" id="IPR036670">
    <property type="entry name" value="SecA_X-link_sf"/>
</dbReference>
<dbReference type="NCBIfam" id="NF006630">
    <property type="entry name" value="PRK09200.1"/>
    <property type="match status" value="1"/>
</dbReference>
<dbReference type="NCBIfam" id="NF009538">
    <property type="entry name" value="PRK12904.1"/>
    <property type="match status" value="1"/>
</dbReference>
<dbReference type="NCBIfam" id="TIGR00963">
    <property type="entry name" value="secA"/>
    <property type="match status" value="1"/>
</dbReference>
<dbReference type="PANTHER" id="PTHR30612:SF0">
    <property type="entry name" value="CHLOROPLAST PROTEIN-TRANSPORTING ATPASE"/>
    <property type="match status" value="1"/>
</dbReference>
<dbReference type="PANTHER" id="PTHR30612">
    <property type="entry name" value="SECA INNER MEMBRANE COMPONENT OF SEC PROTEIN SECRETION SYSTEM"/>
    <property type="match status" value="1"/>
</dbReference>
<dbReference type="Pfam" id="PF21090">
    <property type="entry name" value="P-loop_SecA"/>
    <property type="match status" value="1"/>
</dbReference>
<dbReference type="Pfam" id="PF07517">
    <property type="entry name" value="SecA_DEAD"/>
    <property type="match status" value="1"/>
</dbReference>
<dbReference type="Pfam" id="PF01043">
    <property type="entry name" value="SecA_PP_bind"/>
    <property type="match status" value="1"/>
</dbReference>
<dbReference type="Pfam" id="PF07516">
    <property type="entry name" value="SecA_SW"/>
    <property type="match status" value="1"/>
</dbReference>
<dbReference type="PRINTS" id="PR00906">
    <property type="entry name" value="SECA"/>
</dbReference>
<dbReference type="SMART" id="SM00490">
    <property type="entry name" value="HELICc"/>
    <property type="match status" value="1"/>
</dbReference>
<dbReference type="SMART" id="SM00957">
    <property type="entry name" value="SecA_DEAD"/>
    <property type="match status" value="1"/>
</dbReference>
<dbReference type="SMART" id="SM00958">
    <property type="entry name" value="SecA_PP_bind"/>
    <property type="match status" value="1"/>
</dbReference>
<dbReference type="SUPFAM" id="SSF81886">
    <property type="entry name" value="Helical scaffold and wing domains of SecA"/>
    <property type="match status" value="1"/>
</dbReference>
<dbReference type="SUPFAM" id="SSF52540">
    <property type="entry name" value="P-loop containing nucleoside triphosphate hydrolases"/>
    <property type="match status" value="2"/>
</dbReference>
<dbReference type="SUPFAM" id="SSF81767">
    <property type="entry name" value="Pre-protein crosslinking domain of SecA"/>
    <property type="match status" value="1"/>
</dbReference>
<dbReference type="PROSITE" id="PS51196">
    <property type="entry name" value="SECA_MOTOR_DEAD"/>
    <property type="match status" value="1"/>
</dbReference>
<name>SECA_PELUB</name>
<proteinExistence type="inferred from homology"/>
<protein>
    <recommendedName>
        <fullName evidence="1">Protein translocase subunit SecA</fullName>
        <ecNumber evidence="1">7.4.2.8</ecNumber>
    </recommendedName>
</protein>